<gene>
    <name evidence="1" type="primary">acpP</name>
    <name type="synonym">acl1</name>
</gene>
<proteinExistence type="inferred from homology"/>
<comment type="function">
    <text evidence="1">Carrier of the growing fatty acid chain in fatty acid biosynthesis.</text>
</comment>
<comment type="pathway">
    <text evidence="1">Lipid metabolism; fatty acid biosynthesis.</text>
</comment>
<comment type="subcellular location">
    <subcellularLocation>
        <location>Plastid</location>
        <location>Chloroplast</location>
    </subcellularLocation>
</comment>
<comment type="PTM">
    <text evidence="1">4'-phosphopantetheine is transferred from CoA to a specific serine of apo-ACP by AcpS. This modification is essential for activity because fatty acids are bound in thioester linkage to the sulfhydryl of the prosthetic group.</text>
</comment>
<comment type="similarity">
    <text evidence="1">Belongs to the acyl carrier protein (ACP) family.</text>
</comment>
<sequence>MQDNEIFEKVQDIVAEQLGIEKTIVTREANFSSDLGADSLDTVELVMAIEEKFAIEIPDEDAEKITNLSEVVDFIKSKLNTISV</sequence>
<name>ACP_PORPU</name>
<dbReference type="EMBL" id="U38804">
    <property type="protein sequence ID" value="AAC08166.1"/>
    <property type="molecule type" value="Genomic_DNA"/>
</dbReference>
<dbReference type="PIR" id="S73201">
    <property type="entry name" value="S73201"/>
</dbReference>
<dbReference type="RefSeq" id="NP_053890.1">
    <property type="nucleotide sequence ID" value="NC_000925.1"/>
</dbReference>
<dbReference type="SMR" id="P51280"/>
<dbReference type="GeneID" id="809911"/>
<dbReference type="UniPathway" id="UPA00094"/>
<dbReference type="GO" id="GO:0009507">
    <property type="term" value="C:chloroplast"/>
    <property type="evidence" value="ECO:0007669"/>
    <property type="project" value="UniProtKB-SubCell"/>
</dbReference>
<dbReference type="GO" id="GO:0005829">
    <property type="term" value="C:cytosol"/>
    <property type="evidence" value="ECO:0007669"/>
    <property type="project" value="TreeGrafter"/>
</dbReference>
<dbReference type="GO" id="GO:0016020">
    <property type="term" value="C:membrane"/>
    <property type="evidence" value="ECO:0007669"/>
    <property type="project" value="GOC"/>
</dbReference>
<dbReference type="GO" id="GO:0000035">
    <property type="term" value="F:acyl binding"/>
    <property type="evidence" value="ECO:0007669"/>
    <property type="project" value="TreeGrafter"/>
</dbReference>
<dbReference type="GO" id="GO:0000036">
    <property type="term" value="F:acyl carrier activity"/>
    <property type="evidence" value="ECO:0007669"/>
    <property type="project" value="UniProtKB-UniRule"/>
</dbReference>
<dbReference type="GO" id="GO:0009245">
    <property type="term" value="P:lipid A biosynthetic process"/>
    <property type="evidence" value="ECO:0007669"/>
    <property type="project" value="TreeGrafter"/>
</dbReference>
<dbReference type="FunFam" id="1.10.1200.10:FF:000003">
    <property type="entry name" value="Acyl carrier protein"/>
    <property type="match status" value="1"/>
</dbReference>
<dbReference type="Gene3D" id="1.10.1200.10">
    <property type="entry name" value="ACP-like"/>
    <property type="match status" value="1"/>
</dbReference>
<dbReference type="HAMAP" id="MF_01217">
    <property type="entry name" value="Acyl_carrier"/>
    <property type="match status" value="1"/>
</dbReference>
<dbReference type="InterPro" id="IPR003231">
    <property type="entry name" value="ACP"/>
</dbReference>
<dbReference type="InterPro" id="IPR036736">
    <property type="entry name" value="ACP-like_sf"/>
</dbReference>
<dbReference type="InterPro" id="IPR009081">
    <property type="entry name" value="PP-bd_ACP"/>
</dbReference>
<dbReference type="InterPro" id="IPR006162">
    <property type="entry name" value="Ppantetheine_attach_site"/>
</dbReference>
<dbReference type="NCBIfam" id="TIGR00517">
    <property type="entry name" value="acyl_carrier"/>
    <property type="match status" value="1"/>
</dbReference>
<dbReference type="NCBIfam" id="NF002148">
    <property type="entry name" value="PRK00982.1-2"/>
    <property type="match status" value="1"/>
</dbReference>
<dbReference type="NCBIfam" id="NF002150">
    <property type="entry name" value="PRK00982.1-4"/>
    <property type="match status" value="1"/>
</dbReference>
<dbReference type="NCBIfam" id="NF002151">
    <property type="entry name" value="PRK00982.1-5"/>
    <property type="match status" value="1"/>
</dbReference>
<dbReference type="PANTHER" id="PTHR20863">
    <property type="entry name" value="ACYL CARRIER PROTEIN"/>
    <property type="match status" value="1"/>
</dbReference>
<dbReference type="PANTHER" id="PTHR20863:SF76">
    <property type="entry name" value="CARRIER DOMAIN-CONTAINING PROTEIN"/>
    <property type="match status" value="1"/>
</dbReference>
<dbReference type="Pfam" id="PF00550">
    <property type="entry name" value="PP-binding"/>
    <property type="match status" value="1"/>
</dbReference>
<dbReference type="SUPFAM" id="SSF47336">
    <property type="entry name" value="ACP-like"/>
    <property type="match status" value="1"/>
</dbReference>
<dbReference type="PROSITE" id="PS50075">
    <property type="entry name" value="CARRIER"/>
    <property type="match status" value="1"/>
</dbReference>
<dbReference type="PROSITE" id="PS00012">
    <property type="entry name" value="PHOSPHOPANTETHEINE"/>
    <property type="match status" value="1"/>
</dbReference>
<accession>P51280</accession>
<protein>
    <recommendedName>
        <fullName evidence="1">Acyl carrier protein</fullName>
        <shortName evidence="1">ACP</shortName>
    </recommendedName>
</protein>
<feature type="chain" id="PRO_0000180235" description="Acyl carrier protein">
    <location>
        <begin position="1"/>
        <end position="84"/>
    </location>
</feature>
<feature type="domain" description="Carrier" evidence="2">
    <location>
        <begin position="4"/>
        <end position="79"/>
    </location>
</feature>
<feature type="modified residue" description="O-(pantetheine 4'-phosphoryl)serine" evidence="2">
    <location>
        <position position="39"/>
    </location>
</feature>
<keyword id="KW-0150">Chloroplast</keyword>
<keyword id="KW-0275">Fatty acid biosynthesis</keyword>
<keyword id="KW-0276">Fatty acid metabolism</keyword>
<keyword id="KW-0444">Lipid biosynthesis</keyword>
<keyword id="KW-0443">Lipid metabolism</keyword>
<keyword id="KW-0596">Phosphopantetheine</keyword>
<keyword id="KW-0597">Phosphoprotein</keyword>
<keyword id="KW-0934">Plastid</keyword>
<evidence type="ECO:0000255" key="1">
    <source>
        <dbReference type="HAMAP-Rule" id="MF_01217"/>
    </source>
</evidence>
<evidence type="ECO:0000255" key="2">
    <source>
        <dbReference type="PROSITE-ProRule" id="PRU00258"/>
    </source>
</evidence>
<geneLocation type="chloroplast"/>
<organism>
    <name type="scientific">Porphyra purpurea</name>
    <name type="common">Red seaweed</name>
    <name type="synonym">Ulva purpurea</name>
    <dbReference type="NCBI Taxonomy" id="2787"/>
    <lineage>
        <taxon>Eukaryota</taxon>
        <taxon>Rhodophyta</taxon>
        <taxon>Bangiophyceae</taxon>
        <taxon>Bangiales</taxon>
        <taxon>Bangiaceae</taxon>
        <taxon>Porphyra</taxon>
    </lineage>
</organism>
<reference key="1">
    <citation type="journal article" date="1995" name="Plant Mol. Biol. Rep.">
        <title>Complete nucleotide sequence of the Porphyra purpurea chloroplast genome.</title>
        <authorList>
            <person name="Reith M.E."/>
            <person name="Munholland J."/>
        </authorList>
    </citation>
    <scope>NUCLEOTIDE SEQUENCE [LARGE SCALE GENOMIC DNA]</scope>
    <source>
        <strain>Avonport</strain>
    </source>
</reference>